<proteinExistence type="inferred from homology"/>
<name>KDUI_YERE8</name>
<evidence type="ECO:0000255" key="1">
    <source>
        <dbReference type="HAMAP-Rule" id="MF_00687"/>
    </source>
</evidence>
<feature type="chain" id="PRO_1000045095" description="4-deoxy-L-threo-5-hexosulose-uronate ketol-isomerase">
    <location>
        <begin position="1"/>
        <end position="278"/>
    </location>
</feature>
<feature type="binding site" evidence="1">
    <location>
        <position position="196"/>
    </location>
    <ligand>
        <name>Zn(2+)</name>
        <dbReference type="ChEBI" id="CHEBI:29105"/>
    </ligand>
</feature>
<feature type="binding site" evidence="1">
    <location>
        <position position="198"/>
    </location>
    <ligand>
        <name>Zn(2+)</name>
        <dbReference type="ChEBI" id="CHEBI:29105"/>
    </ligand>
</feature>
<feature type="binding site" evidence="1">
    <location>
        <position position="203"/>
    </location>
    <ligand>
        <name>Zn(2+)</name>
        <dbReference type="ChEBI" id="CHEBI:29105"/>
    </ligand>
</feature>
<feature type="binding site" evidence="1">
    <location>
        <position position="245"/>
    </location>
    <ligand>
        <name>Zn(2+)</name>
        <dbReference type="ChEBI" id="CHEBI:29105"/>
    </ligand>
</feature>
<gene>
    <name evidence="1" type="primary">kduI</name>
    <name type="ordered locus">YE1888</name>
</gene>
<sequence length="278" mass="31190">MQICQSIHSDHARQLDTAGLRREFLIENIFVSDEYTMTYSHIDRIIVGGILPVEKTVSIGDEVGKQLGVSYFLERRELGVINIGGPGLITVDGQVYEIGNQEALYVGKGAKEVTFNSLESSKPAKFYYNSAPAHTTYPNKKITLAEAAPQTLGDDATSNRRTINKYIVPDVLPTCQLTMGLTKLAPGNLWNTMPCHTHDRRMEVYFYFDMDEETAVFHMMGQAQETRHLLVHNEQAVISPSWSIHSGVGTKRYTFIWGMVGENQVFGDMDHIAVSELR</sequence>
<protein>
    <recommendedName>
        <fullName evidence="1">4-deoxy-L-threo-5-hexosulose-uronate ketol-isomerase</fullName>
        <ecNumber evidence="1">5.3.1.17</ecNumber>
    </recommendedName>
    <alternativeName>
        <fullName evidence="1">5-keto-4-deoxyuronate isomerase</fullName>
    </alternativeName>
    <alternativeName>
        <fullName evidence="1">DKI isomerase</fullName>
    </alternativeName>
</protein>
<dbReference type="EC" id="5.3.1.17" evidence="1"/>
<dbReference type="EMBL" id="AM286415">
    <property type="protein sequence ID" value="CAL11967.1"/>
    <property type="molecule type" value="Genomic_DNA"/>
</dbReference>
<dbReference type="RefSeq" id="WP_011816214.1">
    <property type="nucleotide sequence ID" value="NC_008800.1"/>
</dbReference>
<dbReference type="RefSeq" id="YP_001006149.1">
    <property type="nucleotide sequence ID" value="NC_008800.1"/>
</dbReference>
<dbReference type="SMR" id="A1JMF5"/>
<dbReference type="KEGG" id="yen:YE1888"/>
<dbReference type="PATRIC" id="fig|393305.7.peg.2042"/>
<dbReference type="eggNOG" id="COG3717">
    <property type="taxonomic scope" value="Bacteria"/>
</dbReference>
<dbReference type="HOGENOM" id="CLU_062609_0_0_6"/>
<dbReference type="OrthoDB" id="9770644at2"/>
<dbReference type="UniPathway" id="UPA00545">
    <property type="reaction ID" value="UER00826"/>
</dbReference>
<dbReference type="Proteomes" id="UP000000642">
    <property type="component" value="Chromosome"/>
</dbReference>
<dbReference type="GO" id="GO:0008697">
    <property type="term" value="F:4-deoxy-L-threo-5-hexosulose-uronate ketol-isomerase activity"/>
    <property type="evidence" value="ECO:0007669"/>
    <property type="project" value="UniProtKB-UniRule"/>
</dbReference>
<dbReference type="GO" id="GO:0008270">
    <property type="term" value="F:zinc ion binding"/>
    <property type="evidence" value="ECO:0007669"/>
    <property type="project" value="UniProtKB-UniRule"/>
</dbReference>
<dbReference type="GO" id="GO:0019698">
    <property type="term" value="P:D-galacturonate catabolic process"/>
    <property type="evidence" value="ECO:0007669"/>
    <property type="project" value="TreeGrafter"/>
</dbReference>
<dbReference type="GO" id="GO:0042840">
    <property type="term" value="P:D-glucuronate catabolic process"/>
    <property type="evidence" value="ECO:0007669"/>
    <property type="project" value="TreeGrafter"/>
</dbReference>
<dbReference type="GO" id="GO:0045490">
    <property type="term" value="P:pectin catabolic process"/>
    <property type="evidence" value="ECO:0007669"/>
    <property type="project" value="UniProtKB-UniRule"/>
</dbReference>
<dbReference type="CDD" id="cd20491">
    <property type="entry name" value="cupin_KduI_C"/>
    <property type="match status" value="1"/>
</dbReference>
<dbReference type="CDD" id="cd20294">
    <property type="entry name" value="cupin_KduI_N"/>
    <property type="match status" value="1"/>
</dbReference>
<dbReference type="FunFam" id="2.60.120.10:FF:000018">
    <property type="entry name" value="4-deoxy-L-threo-5-hexosulose-uronate ketol-isomerase"/>
    <property type="match status" value="1"/>
</dbReference>
<dbReference type="FunFam" id="2.60.120.520:FF:000001">
    <property type="entry name" value="4-deoxy-L-threo-5-hexosulose-uronate ketol-isomerase"/>
    <property type="match status" value="1"/>
</dbReference>
<dbReference type="Gene3D" id="2.60.120.10">
    <property type="entry name" value="Jelly Rolls"/>
    <property type="match status" value="1"/>
</dbReference>
<dbReference type="Gene3D" id="2.60.120.520">
    <property type="entry name" value="pectin degrading enzyme 5-keto 4- deoxyuronate isomerase, domain 1"/>
    <property type="match status" value="1"/>
</dbReference>
<dbReference type="HAMAP" id="MF_00687">
    <property type="entry name" value="KduI"/>
    <property type="match status" value="1"/>
</dbReference>
<dbReference type="InterPro" id="IPR007045">
    <property type="entry name" value="KduI"/>
</dbReference>
<dbReference type="InterPro" id="IPR021120">
    <property type="entry name" value="KduI/IolB_isomerase"/>
</dbReference>
<dbReference type="InterPro" id="IPR027449">
    <property type="entry name" value="KduI_N"/>
</dbReference>
<dbReference type="InterPro" id="IPR014710">
    <property type="entry name" value="RmlC-like_jellyroll"/>
</dbReference>
<dbReference type="InterPro" id="IPR011051">
    <property type="entry name" value="RmlC_Cupin_sf"/>
</dbReference>
<dbReference type="NCBIfam" id="NF002091">
    <property type="entry name" value="PRK00924.1"/>
    <property type="match status" value="1"/>
</dbReference>
<dbReference type="PANTHER" id="PTHR38461">
    <property type="entry name" value="4-DEOXY-L-THREO-5-HEXOSULOSE-URONATE KETOL-ISOMERASE"/>
    <property type="match status" value="1"/>
</dbReference>
<dbReference type="PANTHER" id="PTHR38461:SF1">
    <property type="entry name" value="4-DEOXY-L-THREO-5-HEXOSULOSE-URONATE KETOL-ISOMERASE"/>
    <property type="match status" value="1"/>
</dbReference>
<dbReference type="Pfam" id="PF04962">
    <property type="entry name" value="KduI"/>
    <property type="match status" value="1"/>
</dbReference>
<dbReference type="PIRSF" id="PIRSF006625">
    <property type="entry name" value="KduI"/>
    <property type="match status" value="1"/>
</dbReference>
<dbReference type="SUPFAM" id="SSF51182">
    <property type="entry name" value="RmlC-like cupins"/>
    <property type="match status" value="1"/>
</dbReference>
<accession>A1JMF5</accession>
<keyword id="KW-0413">Isomerase</keyword>
<keyword id="KW-0479">Metal-binding</keyword>
<keyword id="KW-0862">Zinc</keyword>
<organism>
    <name type="scientific">Yersinia enterocolitica serotype O:8 / biotype 1B (strain NCTC 13174 / 8081)</name>
    <dbReference type="NCBI Taxonomy" id="393305"/>
    <lineage>
        <taxon>Bacteria</taxon>
        <taxon>Pseudomonadati</taxon>
        <taxon>Pseudomonadota</taxon>
        <taxon>Gammaproteobacteria</taxon>
        <taxon>Enterobacterales</taxon>
        <taxon>Yersiniaceae</taxon>
        <taxon>Yersinia</taxon>
    </lineage>
</organism>
<comment type="function">
    <text evidence="1">Catalyzes the isomerization of 5-dehydro-4-deoxy-D-glucuronate to 3-deoxy-D-glycero-2,5-hexodiulosonate.</text>
</comment>
<comment type="catalytic activity">
    <reaction evidence="1">
        <text>5-dehydro-4-deoxy-D-glucuronate = 3-deoxy-D-glycero-2,5-hexodiulosonate</text>
        <dbReference type="Rhea" id="RHEA:23896"/>
        <dbReference type="ChEBI" id="CHEBI:17117"/>
        <dbReference type="ChEBI" id="CHEBI:29071"/>
        <dbReference type="EC" id="5.3.1.17"/>
    </reaction>
</comment>
<comment type="cofactor">
    <cofactor evidence="1">
        <name>Zn(2+)</name>
        <dbReference type="ChEBI" id="CHEBI:29105"/>
    </cofactor>
    <text evidence="1">Binds 1 zinc ion per subunit.</text>
</comment>
<comment type="pathway">
    <text evidence="1">Glycan metabolism; pectin degradation; 2-dehydro-3-deoxy-D-gluconate from pectin: step 4/5.</text>
</comment>
<comment type="similarity">
    <text evidence="1">Belongs to the KduI family.</text>
</comment>
<reference key="1">
    <citation type="journal article" date="2006" name="PLoS Genet.">
        <title>The complete genome sequence and comparative genome analysis of the high pathogenicity Yersinia enterocolitica strain 8081.</title>
        <authorList>
            <person name="Thomson N.R."/>
            <person name="Howard S."/>
            <person name="Wren B.W."/>
            <person name="Holden M.T.G."/>
            <person name="Crossman L."/>
            <person name="Challis G.L."/>
            <person name="Churcher C."/>
            <person name="Mungall K."/>
            <person name="Brooks K."/>
            <person name="Chillingworth T."/>
            <person name="Feltwell T."/>
            <person name="Abdellah Z."/>
            <person name="Hauser H."/>
            <person name="Jagels K."/>
            <person name="Maddison M."/>
            <person name="Moule S."/>
            <person name="Sanders M."/>
            <person name="Whitehead S."/>
            <person name="Quail M.A."/>
            <person name="Dougan G."/>
            <person name="Parkhill J."/>
            <person name="Prentice M.B."/>
        </authorList>
    </citation>
    <scope>NUCLEOTIDE SEQUENCE [LARGE SCALE GENOMIC DNA]</scope>
    <source>
        <strain>NCTC 13174 / 8081</strain>
    </source>
</reference>